<gene>
    <name evidence="1" type="primary">pyrG</name>
    <name type="ordered locus">BMA1691</name>
</gene>
<name>PYRG_BURMA</name>
<dbReference type="EC" id="6.3.4.2" evidence="1"/>
<dbReference type="EMBL" id="CP000010">
    <property type="protein sequence ID" value="AAU47802.1"/>
    <property type="molecule type" value="Genomic_DNA"/>
</dbReference>
<dbReference type="RefSeq" id="WP_004192790.1">
    <property type="nucleotide sequence ID" value="NC_006348.1"/>
</dbReference>
<dbReference type="RefSeq" id="YP_103311.1">
    <property type="nucleotide sequence ID" value="NC_006348.1"/>
</dbReference>
<dbReference type="SMR" id="Q62J08"/>
<dbReference type="KEGG" id="bma:BMA1691"/>
<dbReference type="PATRIC" id="fig|243160.12.peg.1729"/>
<dbReference type="eggNOG" id="COG0504">
    <property type="taxonomic scope" value="Bacteria"/>
</dbReference>
<dbReference type="HOGENOM" id="CLU_011675_5_0_4"/>
<dbReference type="UniPathway" id="UPA00159">
    <property type="reaction ID" value="UER00277"/>
</dbReference>
<dbReference type="Proteomes" id="UP000006693">
    <property type="component" value="Chromosome 1"/>
</dbReference>
<dbReference type="GO" id="GO:0005829">
    <property type="term" value="C:cytosol"/>
    <property type="evidence" value="ECO:0007669"/>
    <property type="project" value="TreeGrafter"/>
</dbReference>
<dbReference type="GO" id="GO:0005524">
    <property type="term" value="F:ATP binding"/>
    <property type="evidence" value="ECO:0007669"/>
    <property type="project" value="UniProtKB-KW"/>
</dbReference>
<dbReference type="GO" id="GO:0003883">
    <property type="term" value="F:CTP synthase activity"/>
    <property type="evidence" value="ECO:0007669"/>
    <property type="project" value="UniProtKB-UniRule"/>
</dbReference>
<dbReference type="GO" id="GO:0004359">
    <property type="term" value="F:glutaminase activity"/>
    <property type="evidence" value="ECO:0007669"/>
    <property type="project" value="RHEA"/>
</dbReference>
<dbReference type="GO" id="GO:0042802">
    <property type="term" value="F:identical protein binding"/>
    <property type="evidence" value="ECO:0007669"/>
    <property type="project" value="TreeGrafter"/>
</dbReference>
<dbReference type="GO" id="GO:0046872">
    <property type="term" value="F:metal ion binding"/>
    <property type="evidence" value="ECO:0007669"/>
    <property type="project" value="UniProtKB-KW"/>
</dbReference>
<dbReference type="GO" id="GO:0044210">
    <property type="term" value="P:'de novo' CTP biosynthetic process"/>
    <property type="evidence" value="ECO:0007669"/>
    <property type="project" value="UniProtKB-UniRule"/>
</dbReference>
<dbReference type="GO" id="GO:0019856">
    <property type="term" value="P:pyrimidine nucleobase biosynthetic process"/>
    <property type="evidence" value="ECO:0007669"/>
    <property type="project" value="TreeGrafter"/>
</dbReference>
<dbReference type="CDD" id="cd03113">
    <property type="entry name" value="CTPS_N"/>
    <property type="match status" value="1"/>
</dbReference>
<dbReference type="CDD" id="cd01746">
    <property type="entry name" value="GATase1_CTP_Synthase"/>
    <property type="match status" value="1"/>
</dbReference>
<dbReference type="FunFam" id="3.40.50.300:FF:000009">
    <property type="entry name" value="CTP synthase"/>
    <property type="match status" value="1"/>
</dbReference>
<dbReference type="FunFam" id="3.40.50.880:FF:000002">
    <property type="entry name" value="CTP synthase"/>
    <property type="match status" value="1"/>
</dbReference>
<dbReference type="Gene3D" id="3.40.50.880">
    <property type="match status" value="1"/>
</dbReference>
<dbReference type="Gene3D" id="3.40.50.300">
    <property type="entry name" value="P-loop containing nucleotide triphosphate hydrolases"/>
    <property type="match status" value="1"/>
</dbReference>
<dbReference type="HAMAP" id="MF_01227">
    <property type="entry name" value="PyrG"/>
    <property type="match status" value="1"/>
</dbReference>
<dbReference type="InterPro" id="IPR029062">
    <property type="entry name" value="Class_I_gatase-like"/>
</dbReference>
<dbReference type="InterPro" id="IPR004468">
    <property type="entry name" value="CTP_synthase"/>
</dbReference>
<dbReference type="InterPro" id="IPR017456">
    <property type="entry name" value="CTP_synthase_N"/>
</dbReference>
<dbReference type="InterPro" id="IPR017926">
    <property type="entry name" value="GATASE"/>
</dbReference>
<dbReference type="InterPro" id="IPR033828">
    <property type="entry name" value="GATase1_CTP_Synthase"/>
</dbReference>
<dbReference type="InterPro" id="IPR027417">
    <property type="entry name" value="P-loop_NTPase"/>
</dbReference>
<dbReference type="NCBIfam" id="NF003792">
    <property type="entry name" value="PRK05380.1"/>
    <property type="match status" value="1"/>
</dbReference>
<dbReference type="NCBIfam" id="TIGR00337">
    <property type="entry name" value="PyrG"/>
    <property type="match status" value="1"/>
</dbReference>
<dbReference type="PANTHER" id="PTHR11550">
    <property type="entry name" value="CTP SYNTHASE"/>
    <property type="match status" value="1"/>
</dbReference>
<dbReference type="PANTHER" id="PTHR11550:SF0">
    <property type="entry name" value="CTP SYNTHASE-RELATED"/>
    <property type="match status" value="1"/>
</dbReference>
<dbReference type="Pfam" id="PF06418">
    <property type="entry name" value="CTP_synth_N"/>
    <property type="match status" value="1"/>
</dbReference>
<dbReference type="Pfam" id="PF00117">
    <property type="entry name" value="GATase"/>
    <property type="match status" value="1"/>
</dbReference>
<dbReference type="SUPFAM" id="SSF52317">
    <property type="entry name" value="Class I glutamine amidotransferase-like"/>
    <property type="match status" value="1"/>
</dbReference>
<dbReference type="SUPFAM" id="SSF52540">
    <property type="entry name" value="P-loop containing nucleoside triphosphate hydrolases"/>
    <property type="match status" value="1"/>
</dbReference>
<dbReference type="PROSITE" id="PS51273">
    <property type="entry name" value="GATASE_TYPE_1"/>
    <property type="match status" value="1"/>
</dbReference>
<keyword id="KW-0067">ATP-binding</keyword>
<keyword id="KW-0315">Glutamine amidotransferase</keyword>
<keyword id="KW-0436">Ligase</keyword>
<keyword id="KW-0460">Magnesium</keyword>
<keyword id="KW-0479">Metal-binding</keyword>
<keyword id="KW-0547">Nucleotide-binding</keyword>
<keyword id="KW-0665">Pyrimidine biosynthesis</keyword>
<keyword id="KW-1185">Reference proteome</keyword>
<accession>Q62J08</accession>
<protein>
    <recommendedName>
        <fullName evidence="1">CTP synthase</fullName>
        <ecNumber evidence="1">6.3.4.2</ecNumber>
    </recommendedName>
    <alternativeName>
        <fullName evidence="1">Cytidine 5'-triphosphate synthase</fullName>
    </alternativeName>
    <alternativeName>
        <fullName evidence="1">Cytidine triphosphate synthetase</fullName>
        <shortName evidence="1">CTP synthetase</shortName>
        <shortName evidence="1">CTPS</shortName>
    </alternativeName>
    <alternativeName>
        <fullName evidence="1">UTP--ammonia ligase</fullName>
    </alternativeName>
</protein>
<proteinExistence type="inferred from homology"/>
<organism>
    <name type="scientific">Burkholderia mallei (strain ATCC 23344)</name>
    <dbReference type="NCBI Taxonomy" id="243160"/>
    <lineage>
        <taxon>Bacteria</taxon>
        <taxon>Pseudomonadati</taxon>
        <taxon>Pseudomonadota</taxon>
        <taxon>Betaproteobacteria</taxon>
        <taxon>Burkholderiales</taxon>
        <taxon>Burkholderiaceae</taxon>
        <taxon>Burkholderia</taxon>
        <taxon>pseudomallei group</taxon>
    </lineage>
</organism>
<reference key="1">
    <citation type="journal article" date="2004" name="Proc. Natl. Acad. Sci. U.S.A.">
        <title>Structural flexibility in the Burkholderia mallei genome.</title>
        <authorList>
            <person name="Nierman W.C."/>
            <person name="DeShazer D."/>
            <person name="Kim H.S."/>
            <person name="Tettelin H."/>
            <person name="Nelson K.E."/>
            <person name="Feldblyum T.V."/>
            <person name="Ulrich R.L."/>
            <person name="Ronning C.M."/>
            <person name="Brinkac L.M."/>
            <person name="Daugherty S.C."/>
            <person name="Davidsen T.D."/>
            <person name="DeBoy R.T."/>
            <person name="Dimitrov G."/>
            <person name="Dodson R.J."/>
            <person name="Durkin A.S."/>
            <person name="Gwinn M.L."/>
            <person name="Haft D.H."/>
            <person name="Khouri H.M."/>
            <person name="Kolonay J.F."/>
            <person name="Madupu R."/>
            <person name="Mohammoud Y."/>
            <person name="Nelson W.C."/>
            <person name="Radune D."/>
            <person name="Romero C.M."/>
            <person name="Sarria S."/>
            <person name="Selengut J."/>
            <person name="Shamblin C."/>
            <person name="Sullivan S.A."/>
            <person name="White O."/>
            <person name="Yu Y."/>
            <person name="Zafar N."/>
            <person name="Zhou L."/>
            <person name="Fraser C.M."/>
        </authorList>
    </citation>
    <scope>NUCLEOTIDE SEQUENCE [LARGE SCALE GENOMIC DNA]</scope>
    <source>
        <strain>ATCC 23344</strain>
    </source>
</reference>
<feature type="chain" id="PRO_0000266082" description="CTP synthase">
    <location>
        <begin position="1"/>
        <end position="553"/>
    </location>
</feature>
<feature type="domain" description="Glutamine amidotransferase type-1" evidence="1">
    <location>
        <begin position="295"/>
        <end position="547"/>
    </location>
</feature>
<feature type="region of interest" description="Amidoligase domain" evidence="1">
    <location>
        <begin position="1"/>
        <end position="270"/>
    </location>
</feature>
<feature type="active site" description="Nucleophile; for glutamine hydrolysis" evidence="1">
    <location>
        <position position="383"/>
    </location>
</feature>
<feature type="active site" evidence="1">
    <location>
        <position position="520"/>
    </location>
</feature>
<feature type="active site" evidence="1">
    <location>
        <position position="522"/>
    </location>
</feature>
<feature type="binding site" evidence="1">
    <location>
        <position position="13"/>
    </location>
    <ligand>
        <name>CTP</name>
        <dbReference type="ChEBI" id="CHEBI:37563"/>
        <note>allosteric inhibitor</note>
    </ligand>
</feature>
<feature type="binding site" evidence="1">
    <location>
        <position position="13"/>
    </location>
    <ligand>
        <name>UTP</name>
        <dbReference type="ChEBI" id="CHEBI:46398"/>
    </ligand>
</feature>
<feature type="binding site" evidence="1">
    <location>
        <begin position="14"/>
        <end position="19"/>
    </location>
    <ligand>
        <name>ATP</name>
        <dbReference type="ChEBI" id="CHEBI:30616"/>
    </ligand>
</feature>
<feature type="binding site" evidence="1">
    <location>
        <position position="71"/>
    </location>
    <ligand>
        <name>ATP</name>
        <dbReference type="ChEBI" id="CHEBI:30616"/>
    </ligand>
</feature>
<feature type="binding site" evidence="1">
    <location>
        <position position="71"/>
    </location>
    <ligand>
        <name>Mg(2+)</name>
        <dbReference type="ChEBI" id="CHEBI:18420"/>
    </ligand>
</feature>
<feature type="binding site" evidence="1">
    <location>
        <position position="144"/>
    </location>
    <ligand>
        <name>Mg(2+)</name>
        <dbReference type="ChEBI" id="CHEBI:18420"/>
    </ligand>
</feature>
<feature type="binding site" evidence="1">
    <location>
        <begin position="151"/>
        <end position="153"/>
    </location>
    <ligand>
        <name>CTP</name>
        <dbReference type="ChEBI" id="CHEBI:37563"/>
        <note>allosteric inhibitor</note>
    </ligand>
</feature>
<feature type="binding site" evidence="1">
    <location>
        <begin position="191"/>
        <end position="196"/>
    </location>
    <ligand>
        <name>CTP</name>
        <dbReference type="ChEBI" id="CHEBI:37563"/>
        <note>allosteric inhibitor</note>
    </ligand>
</feature>
<feature type="binding site" evidence="1">
    <location>
        <begin position="191"/>
        <end position="196"/>
    </location>
    <ligand>
        <name>UTP</name>
        <dbReference type="ChEBI" id="CHEBI:46398"/>
    </ligand>
</feature>
<feature type="binding site" evidence="1">
    <location>
        <position position="227"/>
    </location>
    <ligand>
        <name>CTP</name>
        <dbReference type="ChEBI" id="CHEBI:37563"/>
        <note>allosteric inhibitor</note>
    </ligand>
</feature>
<feature type="binding site" evidence="1">
    <location>
        <position position="227"/>
    </location>
    <ligand>
        <name>UTP</name>
        <dbReference type="ChEBI" id="CHEBI:46398"/>
    </ligand>
</feature>
<feature type="binding site" evidence="1">
    <location>
        <position position="356"/>
    </location>
    <ligand>
        <name>L-glutamine</name>
        <dbReference type="ChEBI" id="CHEBI:58359"/>
    </ligand>
</feature>
<feature type="binding site" evidence="1">
    <location>
        <begin position="384"/>
        <end position="387"/>
    </location>
    <ligand>
        <name>L-glutamine</name>
        <dbReference type="ChEBI" id="CHEBI:58359"/>
    </ligand>
</feature>
<feature type="binding site" evidence="1">
    <location>
        <position position="407"/>
    </location>
    <ligand>
        <name>L-glutamine</name>
        <dbReference type="ChEBI" id="CHEBI:58359"/>
    </ligand>
</feature>
<feature type="binding site" evidence="1">
    <location>
        <position position="473"/>
    </location>
    <ligand>
        <name>L-glutamine</name>
        <dbReference type="ChEBI" id="CHEBI:58359"/>
    </ligand>
</feature>
<sequence length="553" mass="61042">MTKYVFVTGGVVSSLGKGIAAASLAAILESRGLKVTLLKLDPYINVDPGTMSPFQHGEVFVTEDGAETDLDLGHYERFISTKMRKANNFTTGQIYESVIRKERRGDYLGKTVQVIPHITNEIQAFIERGAASATCGEPDVAIVEIGGTVGDIESLPFLEAARQMSLRLGRNSACFVHLTLVPFIATAGELKTKPTQHSVQKLREIGISPHVLLCRADRPIPDDESKKISLFSNVPEDAVISVWDVDSIYKIPQMLHDQGLDRLICEELRLDPQPADLRMWAALVEKLQNPKHEVTIGMVGKYVDLTESYKSLIEALRHASIHTSTKVNIEYIDSEELETNGTASLAHLDAVLVPGGFGRRGTEGKIAAVRYAREAKVPYLGICLGMQLAVIEFARDVVGLKQANSTEFDPNTPERVVALITEWYDREGKVEKRTEDSDLGGTMRLGSQRCPIKPGTLAEAIYGKDVNERHRHRYEVNNRFVPQLEAGGLVISARTPSEDLPEMMELPSTMHPWFVGVQFHPEFTSTPRDGHPLFKSFVQAALACQQTRAGAKA</sequence>
<evidence type="ECO:0000255" key="1">
    <source>
        <dbReference type="HAMAP-Rule" id="MF_01227"/>
    </source>
</evidence>
<comment type="function">
    <text evidence="1">Catalyzes the ATP-dependent amination of UTP to CTP with either L-glutamine or ammonia as the source of nitrogen. Regulates intracellular CTP levels through interactions with the four ribonucleotide triphosphates.</text>
</comment>
<comment type="catalytic activity">
    <reaction evidence="1">
        <text>UTP + L-glutamine + ATP + H2O = CTP + L-glutamate + ADP + phosphate + 2 H(+)</text>
        <dbReference type="Rhea" id="RHEA:26426"/>
        <dbReference type="ChEBI" id="CHEBI:15377"/>
        <dbReference type="ChEBI" id="CHEBI:15378"/>
        <dbReference type="ChEBI" id="CHEBI:29985"/>
        <dbReference type="ChEBI" id="CHEBI:30616"/>
        <dbReference type="ChEBI" id="CHEBI:37563"/>
        <dbReference type="ChEBI" id="CHEBI:43474"/>
        <dbReference type="ChEBI" id="CHEBI:46398"/>
        <dbReference type="ChEBI" id="CHEBI:58359"/>
        <dbReference type="ChEBI" id="CHEBI:456216"/>
        <dbReference type="EC" id="6.3.4.2"/>
    </reaction>
</comment>
<comment type="catalytic activity">
    <reaction evidence="1">
        <text>L-glutamine + H2O = L-glutamate + NH4(+)</text>
        <dbReference type="Rhea" id="RHEA:15889"/>
        <dbReference type="ChEBI" id="CHEBI:15377"/>
        <dbReference type="ChEBI" id="CHEBI:28938"/>
        <dbReference type="ChEBI" id="CHEBI:29985"/>
        <dbReference type="ChEBI" id="CHEBI:58359"/>
    </reaction>
</comment>
<comment type="catalytic activity">
    <reaction evidence="1">
        <text>UTP + NH4(+) + ATP = CTP + ADP + phosphate + 2 H(+)</text>
        <dbReference type="Rhea" id="RHEA:16597"/>
        <dbReference type="ChEBI" id="CHEBI:15378"/>
        <dbReference type="ChEBI" id="CHEBI:28938"/>
        <dbReference type="ChEBI" id="CHEBI:30616"/>
        <dbReference type="ChEBI" id="CHEBI:37563"/>
        <dbReference type="ChEBI" id="CHEBI:43474"/>
        <dbReference type="ChEBI" id="CHEBI:46398"/>
        <dbReference type="ChEBI" id="CHEBI:456216"/>
    </reaction>
</comment>
<comment type="activity regulation">
    <text evidence="1">Allosterically activated by GTP, when glutamine is the substrate; GTP has no effect on the reaction when ammonia is the substrate. The allosteric effector GTP functions by stabilizing the protein conformation that binds the tetrahedral intermediate(s) formed during glutamine hydrolysis. Inhibited by the product CTP, via allosteric rather than competitive inhibition.</text>
</comment>
<comment type="pathway">
    <text evidence="1">Pyrimidine metabolism; CTP biosynthesis via de novo pathway; CTP from UDP: step 2/2.</text>
</comment>
<comment type="subunit">
    <text evidence="1">Homotetramer.</text>
</comment>
<comment type="miscellaneous">
    <text evidence="1">CTPSs have evolved a hybrid strategy for distinguishing between UTP and CTP. The overlapping regions of the product feedback inhibitory and substrate sites recognize a common feature in both compounds, the triphosphate moiety. To differentiate isosteric substrate and product pyrimidine rings, an additional pocket far from the expected kinase/ligase catalytic site, specifically recognizes the cytosine and ribose portions of the product inhibitor.</text>
</comment>
<comment type="similarity">
    <text evidence="1">Belongs to the CTP synthase family.</text>
</comment>